<gene>
    <name type="ordered locus">PMN2A_1813</name>
</gene>
<dbReference type="EMBL" id="CP000095">
    <property type="protein sequence ID" value="AAZ59301.1"/>
    <property type="molecule type" value="Genomic_DNA"/>
</dbReference>
<dbReference type="RefSeq" id="WP_011294445.1">
    <property type="nucleotide sequence ID" value="NC_007335.2"/>
</dbReference>
<dbReference type="SMR" id="Q46GU2"/>
<dbReference type="STRING" id="59920.PMN2A_1813"/>
<dbReference type="KEGG" id="pmn:PMN2A_1813"/>
<dbReference type="HOGENOM" id="CLU_099839_0_0_3"/>
<dbReference type="OrthoDB" id="9801447at2"/>
<dbReference type="PhylomeDB" id="Q46GU2"/>
<dbReference type="Proteomes" id="UP000002535">
    <property type="component" value="Chromosome"/>
</dbReference>
<dbReference type="GO" id="GO:0005829">
    <property type="term" value="C:cytosol"/>
    <property type="evidence" value="ECO:0007669"/>
    <property type="project" value="TreeGrafter"/>
</dbReference>
<dbReference type="GO" id="GO:0000166">
    <property type="term" value="F:nucleotide binding"/>
    <property type="evidence" value="ECO:0007669"/>
    <property type="project" value="TreeGrafter"/>
</dbReference>
<dbReference type="CDD" id="cd11740">
    <property type="entry name" value="YajQ_like"/>
    <property type="match status" value="1"/>
</dbReference>
<dbReference type="Gene3D" id="3.30.70.860">
    <property type="match status" value="1"/>
</dbReference>
<dbReference type="Gene3D" id="3.30.70.990">
    <property type="entry name" value="YajQ-like, domain 2"/>
    <property type="match status" value="1"/>
</dbReference>
<dbReference type="HAMAP" id="MF_00632">
    <property type="entry name" value="YajQ"/>
    <property type="match status" value="1"/>
</dbReference>
<dbReference type="InterPro" id="IPR007551">
    <property type="entry name" value="DUF520"/>
</dbReference>
<dbReference type="InterPro" id="IPR035571">
    <property type="entry name" value="UPF0234-like_C"/>
</dbReference>
<dbReference type="InterPro" id="IPR035570">
    <property type="entry name" value="UPF0234_N"/>
</dbReference>
<dbReference type="InterPro" id="IPR036183">
    <property type="entry name" value="YajQ-like_sf"/>
</dbReference>
<dbReference type="NCBIfam" id="NF003819">
    <property type="entry name" value="PRK05412.1"/>
    <property type="match status" value="1"/>
</dbReference>
<dbReference type="PANTHER" id="PTHR30476">
    <property type="entry name" value="UPF0234 PROTEIN YAJQ"/>
    <property type="match status" value="1"/>
</dbReference>
<dbReference type="PANTHER" id="PTHR30476:SF0">
    <property type="entry name" value="UPF0234 PROTEIN YAJQ"/>
    <property type="match status" value="1"/>
</dbReference>
<dbReference type="Pfam" id="PF04461">
    <property type="entry name" value="DUF520"/>
    <property type="match status" value="1"/>
</dbReference>
<dbReference type="SUPFAM" id="SSF89963">
    <property type="entry name" value="YajQ-like"/>
    <property type="match status" value="2"/>
</dbReference>
<accession>Q46GU2</accession>
<feature type="chain" id="PRO_1000147320" description="Nucleotide-binding protein PMN2A_1813">
    <location>
        <begin position="1"/>
        <end position="165"/>
    </location>
</feature>
<evidence type="ECO:0000255" key="1">
    <source>
        <dbReference type="HAMAP-Rule" id="MF_00632"/>
    </source>
</evidence>
<organism>
    <name type="scientific">Prochlorococcus marinus (strain NATL2A)</name>
    <dbReference type="NCBI Taxonomy" id="59920"/>
    <lineage>
        <taxon>Bacteria</taxon>
        <taxon>Bacillati</taxon>
        <taxon>Cyanobacteriota</taxon>
        <taxon>Cyanophyceae</taxon>
        <taxon>Synechococcales</taxon>
        <taxon>Prochlorococcaceae</taxon>
        <taxon>Prochlorococcus</taxon>
    </lineage>
</organism>
<name>Y1813_PROMT</name>
<proteinExistence type="inferred from homology"/>
<comment type="function">
    <text evidence="1">Nucleotide-binding protein.</text>
</comment>
<comment type="similarity">
    <text evidence="1">Belongs to the YajQ family.</text>
</comment>
<protein>
    <recommendedName>
        <fullName evidence="1">Nucleotide-binding protein PMN2A_1813</fullName>
    </recommendedName>
</protein>
<reference key="1">
    <citation type="journal article" date="2007" name="PLoS Genet.">
        <title>Patterns and implications of gene gain and loss in the evolution of Prochlorococcus.</title>
        <authorList>
            <person name="Kettler G.C."/>
            <person name="Martiny A.C."/>
            <person name="Huang K."/>
            <person name="Zucker J."/>
            <person name="Coleman M.L."/>
            <person name="Rodrigue S."/>
            <person name="Chen F."/>
            <person name="Lapidus A."/>
            <person name="Ferriera S."/>
            <person name="Johnson J."/>
            <person name="Steglich C."/>
            <person name="Church G.M."/>
            <person name="Richardson P."/>
            <person name="Chisholm S.W."/>
        </authorList>
    </citation>
    <scope>NUCLEOTIDE SEQUENCE [LARGE SCALE GENOMIC DNA]</scope>
    <source>
        <strain>NATL2A</strain>
    </source>
</reference>
<keyword id="KW-0547">Nucleotide-binding</keyword>
<keyword id="KW-1185">Reference proteome</keyword>
<sequence length="165" mass="19005">MPSSYSFDVVSEFDQQELVNAIDQLRREVDQRYDLKDSKTKIDIKEDELSIVSLSDMTIESVKDILLQKATKRNLSLKIFDFQKIETIGGNMVMQIVKLKKGLSQEISKKLSKLVRDNMKKVTASIQGDSLRITGKNKDDLQAAINLIKKQEEEFDIALQFQNYR</sequence>